<sequence>MFEAFIYNISVIVAGIYLFHRLQYSENKRMVFSKAYVTVLMTIVSLLLSVYPIPYREDYLIHLTFVPLLFLGRFTNMVYTLSATVIVAIVEIVVFNNSIMYGVTLIVIAAVTSAIGPFLKQNDVLSLLILNVVTIIILFGVALVSPIYTLSEVIILIPISLIITLASAITFVDIWHFFSLVNRYENEDKYDYLTGLGNVKEFDRHLNEISRKAEKEHQSIALLLIDIDGFKDVNDTYSHKSGDAVLKQMSQLLKNYVPNQFKIFRNGGEEFSVVIHNYSLDQSVKLAENIRSGVEKSSFHLPNKEVIKLSVSIGVGYLTDDDPKSQRKVFKDADDMVHVAKNQGRNKVMFNPIINL</sequence>
<comment type="subcellular location">
    <subcellularLocation>
        <location evidence="3">Cell membrane</location>
        <topology evidence="3">Multi-pass membrane protein</topology>
    </subcellularLocation>
</comment>
<organism>
    <name type="scientific">Staphylococcus aureus (strain bovine RF122 / ET3-1)</name>
    <dbReference type="NCBI Taxonomy" id="273036"/>
    <lineage>
        <taxon>Bacteria</taxon>
        <taxon>Bacillati</taxon>
        <taxon>Bacillota</taxon>
        <taxon>Bacilli</taxon>
        <taxon>Bacillales</taxon>
        <taxon>Staphylococcaceae</taxon>
        <taxon>Staphylococcus</taxon>
    </lineage>
</organism>
<name>Y698_STAAB</name>
<keyword id="KW-1003">Cell membrane</keyword>
<keyword id="KW-0472">Membrane</keyword>
<keyword id="KW-0812">Transmembrane</keyword>
<keyword id="KW-1133">Transmembrane helix</keyword>
<evidence type="ECO:0000255" key="1"/>
<evidence type="ECO:0000255" key="2">
    <source>
        <dbReference type="PROSITE-ProRule" id="PRU00095"/>
    </source>
</evidence>
<evidence type="ECO:0000305" key="3"/>
<dbReference type="EMBL" id="AJ938182">
    <property type="protein sequence ID" value="CAI80386.1"/>
    <property type="molecule type" value="Genomic_DNA"/>
</dbReference>
<dbReference type="SMR" id="Q2YSF9"/>
<dbReference type="KEGG" id="sab:SAB0698c"/>
<dbReference type="HOGENOM" id="CLU_000445_11_1_9"/>
<dbReference type="GO" id="GO:0005886">
    <property type="term" value="C:plasma membrane"/>
    <property type="evidence" value="ECO:0007669"/>
    <property type="project" value="UniProtKB-SubCell"/>
</dbReference>
<dbReference type="GO" id="GO:0052621">
    <property type="term" value="F:diguanylate cyclase activity"/>
    <property type="evidence" value="ECO:0007669"/>
    <property type="project" value="TreeGrafter"/>
</dbReference>
<dbReference type="GO" id="GO:0000155">
    <property type="term" value="F:phosphorelay sensor kinase activity"/>
    <property type="evidence" value="ECO:0007669"/>
    <property type="project" value="InterPro"/>
</dbReference>
<dbReference type="GO" id="GO:0043709">
    <property type="term" value="P:cell adhesion involved in single-species biofilm formation"/>
    <property type="evidence" value="ECO:0007669"/>
    <property type="project" value="TreeGrafter"/>
</dbReference>
<dbReference type="GO" id="GO:0071555">
    <property type="term" value="P:cell wall organization"/>
    <property type="evidence" value="ECO:0007669"/>
    <property type="project" value="InterPro"/>
</dbReference>
<dbReference type="GO" id="GO:1902201">
    <property type="term" value="P:negative regulation of bacterial-type flagellum-dependent cell motility"/>
    <property type="evidence" value="ECO:0007669"/>
    <property type="project" value="TreeGrafter"/>
</dbReference>
<dbReference type="CDD" id="cd01949">
    <property type="entry name" value="GGDEF"/>
    <property type="match status" value="1"/>
</dbReference>
<dbReference type="FunFam" id="3.30.70.270:FF:000038">
    <property type="entry name" value="Diguanylate cyclase domain protein"/>
    <property type="match status" value="1"/>
</dbReference>
<dbReference type="Gene3D" id="3.30.70.270">
    <property type="match status" value="1"/>
</dbReference>
<dbReference type="InterPro" id="IPR050469">
    <property type="entry name" value="Diguanylate_Cyclase"/>
</dbReference>
<dbReference type="InterPro" id="IPR000160">
    <property type="entry name" value="GGDEF_dom"/>
</dbReference>
<dbReference type="InterPro" id="IPR029787">
    <property type="entry name" value="Nucleotide_cyclase"/>
</dbReference>
<dbReference type="InterPro" id="IPR043128">
    <property type="entry name" value="Rev_trsase/Diguanyl_cyclase"/>
</dbReference>
<dbReference type="InterPro" id="IPR011620">
    <property type="entry name" value="Sig_transdc_His_kinase_LytS_TM"/>
</dbReference>
<dbReference type="NCBIfam" id="TIGR00254">
    <property type="entry name" value="GGDEF"/>
    <property type="match status" value="1"/>
</dbReference>
<dbReference type="PANTHER" id="PTHR45138:SF9">
    <property type="entry name" value="DIGUANYLATE CYCLASE DGCM-RELATED"/>
    <property type="match status" value="1"/>
</dbReference>
<dbReference type="PANTHER" id="PTHR45138">
    <property type="entry name" value="REGULATORY COMPONENTS OF SENSORY TRANSDUCTION SYSTEM"/>
    <property type="match status" value="1"/>
</dbReference>
<dbReference type="Pfam" id="PF07694">
    <property type="entry name" value="5TM-5TMR_LYT"/>
    <property type="match status" value="1"/>
</dbReference>
<dbReference type="Pfam" id="PF00990">
    <property type="entry name" value="GGDEF"/>
    <property type="match status" value="1"/>
</dbReference>
<dbReference type="SMART" id="SM00267">
    <property type="entry name" value="GGDEF"/>
    <property type="match status" value="1"/>
</dbReference>
<dbReference type="SUPFAM" id="SSF55073">
    <property type="entry name" value="Nucleotide cyclase"/>
    <property type="match status" value="1"/>
</dbReference>
<dbReference type="PROSITE" id="PS50887">
    <property type="entry name" value="GGDEF"/>
    <property type="match status" value="1"/>
</dbReference>
<proteinExistence type="predicted"/>
<reference key="1">
    <citation type="journal article" date="2007" name="PLoS ONE">
        <title>Molecular correlates of host specialization in Staphylococcus aureus.</title>
        <authorList>
            <person name="Herron-Olson L."/>
            <person name="Fitzgerald J.R."/>
            <person name="Musser J.M."/>
            <person name="Kapur V."/>
        </authorList>
    </citation>
    <scope>NUCLEOTIDE SEQUENCE [LARGE SCALE GENOMIC DNA]</scope>
    <source>
        <strain>bovine RF122 / ET3-1</strain>
    </source>
</reference>
<accession>Q2YSF9</accession>
<gene>
    <name type="ordered locus">SAB0698c</name>
</gene>
<protein>
    <recommendedName>
        <fullName>Uncharacterized membrane protein SAB0698c</fullName>
    </recommendedName>
</protein>
<feature type="chain" id="PRO_0000286952" description="Uncharacterized membrane protein SAB0698c">
    <location>
        <begin position="1"/>
        <end position="356"/>
    </location>
</feature>
<feature type="transmembrane region" description="Helical" evidence="1">
    <location>
        <begin position="2"/>
        <end position="22"/>
    </location>
</feature>
<feature type="transmembrane region" description="Helical" evidence="1">
    <location>
        <begin position="35"/>
        <end position="55"/>
    </location>
</feature>
<feature type="transmembrane region" description="Helical" evidence="1">
    <location>
        <begin position="74"/>
        <end position="94"/>
    </location>
</feature>
<feature type="transmembrane region" description="Helical" evidence="1">
    <location>
        <begin position="99"/>
        <end position="119"/>
    </location>
</feature>
<feature type="transmembrane region" description="Helical" evidence="1">
    <location>
        <begin position="124"/>
        <end position="144"/>
    </location>
</feature>
<feature type="transmembrane region" description="Helical" evidence="1">
    <location>
        <begin position="154"/>
        <end position="174"/>
    </location>
</feature>
<feature type="domain" description="GGDEF" evidence="2">
    <location>
        <begin position="218"/>
        <end position="353"/>
    </location>
</feature>